<reference key="1">
    <citation type="journal article" date="2007" name="PLoS Genet.">
        <title>The complete genome sequence of Yersinia pseudotuberculosis IP31758, the causative agent of Far East scarlet-like fever.</title>
        <authorList>
            <person name="Eppinger M."/>
            <person name="Rosovitz M.J."/>
            <person name="Fricke W.F."/>
            <person name="Rasko D.A."/>
            <person name="Kokorina G."/>
            <person name="Fayolle C."/>
            <person name="Lindler L.E."/>
            <person name="Carniel E."/>
            <person name="Ravel J."/>
        </authorList>
    </citation>
    <scope>NUCLEOTIDE SEQUENCE [LARGE SCALE GENOMIC DNA]</scope>
    <source>
        <strain>IP 31758</strain>
    </source>
</reference>
<gene>
    <name evidence="1" type="primary">cmoB</name>
    <name type="ordered locus">YpsIP31758_2039</name>
</gene>
<comment type="function">
    <text evidence="1">Catalyzes carboxymethyl transfer from carboxy-S-adenosyl-L-methionine (Cx-SAM) to 5-hydroxyuridine (ho5U) to form 5-carboxymethoxyuridine (cmo5U) at position 34 in tRNAs.</text>
</comment>
<comment type="catalytic activity">
    <reaction evidence="1">
        <text>carboxy-S-adenosyl-L-methionine + 5-hydroxyuridine(34) in tRNA = 5-carboxymethoxyuridine(34) in tRNA + S-adenosyl-L-homocysteine + H(+)</text>
        <dbReference type="Rhea" id="RHEA:52848"/>
        <dbReference type="Rhea" id="RHEA-COMP:13381"/>
        <dbReference type="Rhea" id="RHEA-COMP:13383"/>
        <dbReference type="ChEBI" id="CHEBI:15378"/>
        <dbReference type="ChEBI" id="CHEBI:57856"/>
        <dbReference type="ChEBI" id="CHEBI:134278"/>
        <dbReference type="ChEBI" id="CHEBI:136877"/>
        <dbReference type="ChEBI" id="CHEBI:136879"/>
    </reaction>
</comment>
<comment type="subunit">
    <text evidence="1">Homotetramer.</text>
</comment>
<comment type="similarity">
    <text evidence="1">Belongs to the class I-like SAM-binding methyltransferase superfamily. CmoB family.</text>
</comment>
<sequence>MIEFGDFYRLIAKGPLSPWLDTLPAQLSAWQRESLHGKFKTWFNAVEHLPQLTPTTLDLHSGVRAEMSPPISAGQREGMENMLRALMPWRKGPFSLYGLDIDTEWRSDWKWQRVLPHISPLAGRTILDVGCGSGYHLWRMIGEGAHLAVGIDPMQLFLCQFEAIRKLLGGDQRAHVLPLGIEQLPELAAFDAVFSMGVLYHRRSPLDHLYQLKNQLVTDGELVLETLVVEGDSQQVLVPGDRYAQMRNVYFIPSAPALKAWLEKCGFVDVRIADMAVTTTEEQRRTDWMTSESLAEFLDPHDHSKTVEGYPAPLRAVLIARKP</sequence>
<feature type="chain" id="PRO_1000069334" description="tRNA U34 carboxymethyltransferase">
    <location>
        <begin position="1"/>
        <end position="323"/>
    </location>
</feature>
<feature type="binding site" evidence="1">
    <location>
        <position position="91"/>
    </location>
    <ligand>
        <name>carboxy-S-adenosyl-L-methionine</name>
        <dbReference type="ChEBI" id="CHEBI:134278"/>
    </ligand>
</feature>
<feature type="binding site" evidence="1">
    <location>
        <position position="105"/>
    </location>
    <ligand>
        <name>carboxy-S-adenosyl-L-methionine</name>
        <dbReference type="ChEBI" id="CHEBI:134278"/>
    </ligand>
</feature>
<feature type="binding site" evidence="1">
    <location>
        <position position="110"/>
    </location>
    <ligand>
        <name>carboxy-S-adenosyl-L-methionine</name>
        <dbReference type="ChEBI" id="CHEBI:134278"/>
    </ligand>
</feature>
<feature type="binding site" evidence="1">
    <location>
        <position position="130"/>
    </location>
    <ligand>
        <name>carboxy-S-adenosyl-L-methionine</name>
        <dbReference type="ChEBI" id="CHEBI:134278"/>
    </ligand>
</feature>
<feature type="binding site" evidence="1">
    <location>
        <begin position="181"/>
        <end position="182"/>
    </location>
    <ligand>
        <name>carboxy-S-adenosyl-L-methionine</name>
        <dbReference type="ChEBI" id="CHEBI:134278"/>
    </ligand>
</feature>
<feature type="binding site" evidence="1">
    <location>
        <position position="196"/>
    </location>
    <ligand>
        <name>carboxy-S-adenosyl-L-methionine</name>
        <dbReference type="ChEBI" id="CHEBI:134278"/>
    </ligand>
</feature>
<feature type="binding site" evidence="1">
    <location>
        <position position="200"/>
    </location>
    <ligand>
        <name>carboxy-S-adenosyl-L-methionine</name>
        <dbReference type="ChEBI" id="CHEBI:134278"/>
    </ligand>
</feature>
<feature type="binding site" evidence="1">
    <location>
        <position position="315"/>
    </location>
    <ligand>
        <name>carboxy-S-adenosyl-L-methionine</name>
        <dbReference type="ChEBI" id="CHEBI:134278"/>
    </ligand>
</feature>
<accession>A7FID4</accession>
<evidence type="ECO:0000255" key="1">
    <source>
        <dbReference type="HAMAP-Rule" id="MF_01590"/>
    </source>
</evidence>
<protein>
    <recommendedName>
        <fullName evidence="1">tRNA U34 carboxymethyltransferase</fullName>
        <ecNumber evidence="1">2.5.1.-</ecNumber>
    </recommendedName>
</protein>
<name>CMOB_YERP3</name>
<organism>
    <name type="scientific">Yersinia pseudotuberculosis serotype O:1b (strain IP 31758)</name>
    <dbReference type="NCBI Taxonomy" id="349747"/>
    <lineage>
        <taxon>Bacteria</taxon>
        <taxon>Pseudomonadati</taxon>
        <taxon>Pseudomonadota</taxon>
        <taxon>Gammaproteobacteria</taxon>
        <taxon>Enterobacterales</taxon>
        <taxon>Yersiniaceae</taxon>
        <taxon>Yersinia</taxon>
    </lineage>
</organism>
<dbReference type="EC" id="2.5.1.-" evidence="1"/>
<dbReference type="EMBL" id="CP000720">
    <property type="protein sequence ID" value="ABS46219.1"/>
    <property type="molecule type" value="Genomic_DNA"/>
</dbReference>
<dbReference type="RefSeq" id="WP_012105130.1">
    <property type="nucleotide sequence ID" value="NC_009708.1"/>
</dbReference>
<dbReference type="SMR" id="A7FID4"/>
<dbReference type="KEGG" id="ypi:YpsIP31758_2039"/>
<dbReference type="HOGENOM" id="CLU_052665_0_0_6"/>
<dbReference type="Proteomes" id="UP000002412">
    <property type="component" value="Chromosome"/>
</dbReference>
<dbReference type="GO" id="GO:0008168">
    <property type="term" value="F:methyltransferase activity"/>
    <property type="evidence" value="ECO:0007669"/>
    <property type="project" value="TreeGrafter"/>
</dbReference>
<dbReference type="GO" id="GO:0016765">
    <property type="term" value="F:transferase activity, transferring alkyl or aryl (other than methyl) groups"/>
    <property type="evidence" value="ECO:0007669"/>
    <property type="project" value="UniProtKB-UniRule"/>
</dbReference>
<dbReference type="GO" id="GO:0002098">
    <property type="term" value="P:tRNA wobble uridine modification"/>
    <property type="evidence" value="ECO:0007669"/>
    <property type="project" value="InterPro"/>
</dbReference>
<dbReference type="CDD" id="cd02440">
    <property type="entry name" value="AdoMet_MTases"/>
    <property type="match status" value="1"/>
</dbReference>
<dbReference type="Gene3D" id="3.40.50.150">
    <property type="entry name" value="Vaccinia Virus protein VP39"/>
    <property type="match status" value="1"/>
</dbReference>
<dbReference type="HAMAP" id="MF_01590">
    <property type="entry name" value="tRNA_carboxymethyltr_CmoB"/>
    <property type="match status" value="1"/>
</dbReference>
<dbReference type="InterPro" id="IPR010017">
    <property type="entry name" value="CmoB"/>
</dbReference>
<dbReference type="InterPro" id="IPR027555">
    <property type="entry name" value="Mo5U34_MeTrfas-like"/>
</dbReference>
<dbReference type="InterPro" id="IPR029063">
    <property type="entry name" value="SAM-dependent_MTases_sf"/>
</dbReference>
<dbReference type="NCBIfam" id="NF011650">
    <property type="entry name" value="PRK15068.1"/>
    <property type="match status" value="1"/>
</dbReference>
<dbReference type="NCBIfam" id="TIGR00452">
    <property type="entry name" value="tRNA 5-methoxyuridine(34)/uridine 5-oxyacetic acid(34) synthase CmoB"/>
    <property type="match status" value="1"/>
</dbReference>
<dbReference type="PANTHER" id="PTHR43464">
    <property type="entry name" value="METHYLTRANSFERASE"/>
    <property type="match status" value="1"/>
</dbReference>
<dbReference type="PANTHER" id="PTHR43464:SF95">
    <property type="entry name" value="TRNA U34 CARBOXYMETHYLTRANSFERASE"/>
    <property type="match status" value="1"/>
</dbReference>
<dbReference type="Pfam" id="PF08003">
    <property type="entry name" value="Methyltransf_9"/>
    <property type="match status" value="1"/>
</dbReference>
<dbReference type="SUPFAM" id="SSF53335">
    <property type="entry name" value="S-adenosyl-L-methionine-dependent methyltransferases"/>
    <property type="match status" value="1"/>
</dbReference>
<keyword id="KW-0808">Transferase</keyword>
<keyword id="KW-0819">tRNA processing</keyword>
<proteinExistence type="inferred from homology"/>